<organism>
    <name type="scientific">Streptococcus pyogenes serotype M1</name>
    <dbReference type="NCBI Taxonomy" id="301447"/>
    <lineage>
        <taxon>Bacteria</taxon>
        <taxon>Bacillati</taxon>
        <taxon>Bacillota</taxon>
        <taxon>Bacilli</taxon>
        <taxon>Lactobacillales</taxon>
        <taxon>Streptococcaceae</taxon>
        <taxon>Streptococcus</taxon>
    </lineage>
</organism>
<protein>
    <recommendedName>
        <fullName>UPF0122 protein SPy_1201/M5005_Spy0916</fullName>
    </recommendedName>
</protein>
<feature type="chain" id="PRO_0000211888" description="UPF0122 protein SPy_1201/M5005_Spy0916">
    <location>
        <begin position="1"/>
        <end position="113"/>
    </location>
</feature>
<reference key="1">
    <citation type="journal article" date="2001" name="Proc. Natl. Acad. Sci. U.S.A.">
        <title>Complete genome sequence of an M1 strain of Streptococcus pyogenes.</title>
        <authorList>
            <person name="Ferretti J.J."/>
            <person name="McShan W.M."/>
            <person name="Ajdic D.J."/>
            <person name="Savic D.J."/>
            <person name="Savic G."/>
            <person name="Lyon K."/>
            <person name="Primeaux C."/>
            <person name="Sezate S."/>
            <person name="Suvorov A.N."/>
            <person name="Kenton S."/>
            <person name="Lai H.S."/>
            <person name="Lin S.P."/>
            <person name="Qian Y."/>
            <person name="Jia H.G."/>
            <person name="Najar F.Z."/>
            <person name="Ren Q."/>
            <person name="Zhu H."/>
            <person name="Song L."/>
            <person name="White J."/>
            <person name="Yuan X."/>
            <person name="Clifton S.W."/>
            <person name="Roe B.A."/>
            <person name="McLaughlin R.E."/>
        </authorList>
    </citation>
    <scope>NUCLEOTIDE SEQUENCE [LARGE SCALE GENOMIC DNA]</scope>
    <source>
        <strain>ATCC 700294 / SF370 / Serotype M1</strain>
    </source>
</reference>
<reference key="2">
    <citation type="journal article" date="2005" name="J. Infect. Dis.">
        <title>Evolutionary origin and emergence of a highly successful clone of serotype M1 group A Streptococcus involved multiple horizontal gene transfer events.</title>
        <authorList>
            <person name="Sumby P."/>
            <person name="Porcella S.F."/>
            <person name="Madrigal A.G."/>
            <person name="Barbian K.D."/>
            <person name="Virtaneva K."/>
            <person name="Ricklefs S.M."/>
            <person name="Sturdevant D.E."/>
            <person name="Graham M.R."/>
            <person name="Vuopio-Varkila J."/>
            <person name="Hoe N.P."/>
            <person name="Musser J.M."/>
        </authorList>
    </citation>
    <scope>NUCLEOTIDE SEQUENCE [LARGE SCALE GENOMIC DNA]</scope>
    <source>
        <strain>ATCC BAA-947 / MGAS5005 / Serotype M1</strain>
    </source>
</reference>
<gene>
    <name type="ordered locus">SPy_1201</name>
    <name type="ordered locus">M5005_Spy0916</name>
</gene>
<name>Y1201_STRP1</name>
<comment type="function">
    <text evidence="1">Might take part in the signal recognition particle (SRP) pathway. This is inferred from the conservation of its genetic proximity to ftsY/ffh. May be a regulatory protein (By similarity).</text>
</comment>
<comment type="similarity">
    <text evidence="2">Belongs to the UPF0122 family.</text>
</comment>
<proteinExistence type="evidence at protein level"/>
<dbReference type="EMBL" id="AE004092">
    <property type="protein sequence ID" value="AAK34061.1"/>
    <property type="molecule type" value="Genomic_DNA"/>
</dbReference>
<dbReference type="EMBL" id="CP000017">
    <property type="protein sequence ID" value="AAZ51534.1"/>
    <property type="molecule type" value="Genomic_DNA"/>
</dbReference>
<dbReference type="RefSeq" id="NP_269340.1">
    <property type="nucleotide sequence ID" value="NC_002737.2"/>
</dbReference>
<dbReference type="PDB" id="1S7O">
    <property type="method" value="X-ray"/>
    <property type="resolution" value="2.31 A"/>
    <property type="chains" value="A/B/C=1-113"/>
</dbReference>
<dbReference type="PDBsum" id="1S7O"/>
<dbReference type="SMR" id="P67253"/>
<dbReference type="PaxDb" id="1314-HKU360_00960"/>
<dbReference type="KEGG" id="spy:SPy_1201"/>
<dbReference type="KEGG" id="spz:M5005_Spy0916"/>
<dbReference type="PATRIC" id="fig|160490.10.peg.1048"/>
<dbReference type="HOGENOM" id="CLU_129218_1_1_9"/>
<dbReference type="OMA" id="YYKNRSI"/>
<dbReference type="Proteomes" id="UP000000750">
    <property type="component" value="Chromosome"/>
</dbReference>
<dbReference type="Gene3D" id="1.10.10.10">
    <property type="entry name" value="Winged helix-like DNA-binding domain superfamily/Winged helix DNA-binding domain"/>
    <property type="match status" value="1"/>
</dbReference>
<dbReference type="HAMAP" id="MF_00245">
    <property type="entry name" value="UPF0122"/>
    <property type="match status" value="1"/>
</dbReference>
<dbReference type="InterPro" id="IPR013324">
    <property type="entry name" value="RNA_pol_sigma_r3/r4-like"/>
</dbReference>
<dbReference type="InterPro" id="IPR007394">
    <property type="entry name" value="UPF0122"/>
</dbReference>
<dbReference type="InterPro" id="IPR054831">
    <property type="entry name" value="UPF0122_fam_protein"/>
</dbReference>
<dbReference type="InterPro" id="IPR036388">
    <property type="entry name" value="WH-like_DNA-bd_sf"/>
</dbReference>
<dbReference type="NCBIfam" id="NF001066">
    <property type="entry name" value="PRK00118.1-1"/>
    <property type="match status" value="1"/>
</dbReference>
<dbReference type="NCBIfam" id="NF001068">
    <property type="entry name" value="PRK00118.1-4"/>
    <property type="match status" value="1"/>
</dbReference>
<dbReference type="NCBIfam" id="NF001070">
    <property type="entry name" value="PRK00118.1-6"/>
    <property type="match status" value="1"/>
</dbReference>
<dbReference type="NCBIfam" id="NF045758">
    <property type="entry name" value="YlxM"/>
    <property type="match status" value="1"/>
</dbReference>
<dbReference type="PANTHER" id="PTHR40083">
    <property type="entry name" value="UPF0122 PROTEIN CBO2450/CLC_2298"/>
    <property type="match status" value="1"/>
</dbReference>
<dbReference type="PANTHER" id="PTHR40083:SF1">
    <property type="entry name" value="UPF0122 PROTEIN YLXM"/>
    <property type="match status" value="1"/>
</dbReference>
<dbReference type="Pfam" id="PF04297">
    <property type="entry name" value="UPF0122"/>
    <property type="match status" value="1"/>
</dbReference>
<dbReference type="SUPFAM" id="SSF88659">
    <property type="entry name" value="Sigma3 and sigma4 domains of RNA polymerase sigma factors"/>
    <property type="match status" value="1"/>
</dbReference>
<sequence>MNIMEIEKTNRMNALFEFYAALLTDKQMNYIELYYADDYSLAEIADEFGVSRQAVYDNIKRTEKILETYEMKLHMYSDYVVRSEIFDDMIAHYPHDEYLQEKISILTSIDNRE</sequence>
<keyword id="KW-0002">3D-structure</keyword>
<keyword id="KW-1185">Reference proteome</keyword>
<accession>P67253</accession>
<accession>Q48YN8</accession>
<accession>Q99ZK0</accession>
<evidence type="ECO:0000250" key="1"/>
<evidence type="ECO:0000305" key="2"/>